<comment type="function">
    <text evidence="1">Catalyzes the formation of S-adenosylmethionine (AdoMet) from methionine and ATP. The overall synthetic reaction is composed of two sequential steps, AdoMet formation and the subsequent tripolyphosphate hydrolysis which occurs prior to release of AdoMet from the enzyme.</text>
</comment>
<comment type="catalytic activity">
    <reaction evidence="1">
        <text>L-methionine + ATP + H2O = S-adenosyl-L-methionine + phosphate + diphosphate</text>
        <dbReference type="Rhea" id="RHEA:21080"/>
        <dbReference type="ChEBI" id="CHEBI:15377"/>
        <dbReference type="ChEBI" id="CHEBI:30616"/>
        <dbReference type="ChEBI" id="CHEBI:33019"/>
        <dbReference type="ChEBI" id="CHEBI:43474"/>
        <dbReference type="ChEBI" id="CHEBI:57844"/>
        <dbReference type="ChEBI" id="CHEBI:59789"/>
        <dbReference type="EC" id="2.5.1.6"/>
    </reaction>
</comment>
<comment type="cofactor">
    <cofactor evidence="1">
        <name>Mg(2+)</name>
        <dbReference type="ChEBI" id="CHEBI:18420"/>
    </cofactor>
    <text evidence="1">Binds 2 divalent ions per subunit.</text>
</comment>
<comment type="cofactor">
    <cofactor evidence="1">
        <name>K(+)</name>
        <dbReference type="ChEBI" id="CHEBI:29103"/>
    </cofactor>
    <text evidence="1">Binds 1 potassium ion per subunit.</text>
</comment>
<comment type="pathway">
    <text evidence="1">Amino-acid biosynthesis; S-adenosyl-L-methionine biosynthesis; S-adenosyl-L-methionine from L-methionine: step 1/1.</text>
</comment>
<comment type="subunit">
    <text evidence="1">Homotetramer; dimer of dimers.</text>
</comment>
<comment type="subcellular location">
    <subcellularLocation>
        <location evidence="1">Cytoplasm</location>
    </subcellularLocation>
</comment>
<comment type="similarity">
    <text evidence="1">Belongs to the AdoMet synthase family.</text>
</comment>
<protein>
    <recommendedName>
        <fullName evidence="1">S-adenosylmethionine synthase</fullName>
        <shortName evidence="1">AdoMet synthase</shortName>
        <ecNumber evidence="1">2.5.1.6</ecNumber>
    </recommendedName>
    <alternativeName>
        <fullName evidence="1">MAT</fullName>
    </alternativeName>
    <alternativeName>
        <fullName evidence="1">Methionine adenosyltransferase</fullName>
    </alternativeName>
</protein>
<evidence type="ECO:0000255" key="1">
    <source>
        <dbReference type="HAMAP-Rule" id="MF_00086"/>
    </source>
</evidence>
<gene>
    <name evidence="1" type="primary">metK</name>
    <name type="ordered locus">Athe_0686</name>
</gene>
<organism>
    <name type="scientific">Caldicellulosiruptor bescii (strain ATCC BAA-1888 / DSM 6725 / KCTC 15123 / Z-1320)</name>
    <name type="common">Anaerocellum thermophilum</name>
    <dbReference type="NCBI Taxonomy" id="521460"/>
    <lineage>
        <taxon>Bacteria</taxon>
        <taxon>Bacillati</taxon>
        <taxon>Bacillota</taxon>
        <taxon>Bacillota incertae sedis</taxon>
        <taxon>Caldicellulosiruptorales</taxon>
        <taxon>Caldicellulosiruptoraceae</taxon>
        <taxon>Caldicellulosiruptor</taxon>
    </lineage>
</organism>
<dbReference type="EC" id="2.5.1.6" evidence="1"/>
<dbReference type="EMBL" id="CP001393">
    <property type="protein sequence ID" value="ACM59802.1"/>
    <property type="molecule type" value="Genomic_DNA"/>
</dbReference>
<dbReference type="RefSeq" id="WP_013430869.1">
    <property type="nucleotide sequence ID" value="NC_012034.1"/>
</dbReference>
<dbReference type="SMR" id="B9MQ10"/>
<dbReference type="STRING" id="521460.Athe_0686"/>
<dbReference type="GeneID" id="31772038"/>
<dbReference type="KEGG" id="ate:Athe_0686"/>
<dbReference type="eggNOG" id="COG0192">
    <property type="taxonomic scope" value="Bacteria"/>
</dbReference>
<dbReference type="HOGENOM" id="CLU_041802_1_1_9"/>
<dbReference type="UniPathway" id="UPA00315">
    <property type="reaction ID" value="UER00080"/>
</dbReference>
<dbReference type="Proteomes" id="UP000007723">
    <property type="component" value="Chromosome"/>
</dbReference>
<dbReference type="GO" id="GO:0005737">
    <property type="term" value="C:cytoplasm"/>
    <property type="evidence" value="ECO:0007669"/>
    <property type="project" value="UniProtKB-SubCell"/>
</dbReference>
<dbReference type="GO" id="GO:0005524">
    <property type="term" value="F:ATP binding"/>
    <property type="evidence" value="ECO:0007669"/>
    <property type="project" value="UniProtKB-UniRule"/>
</dbReference>
<dbReference type="GO" id="GO:0000287">
    <property type="term" value="F:magnesium ion binding"/>
    <property type="evidence" value="ECO:0007669"/>
    <property type="project" value="UniProtKB-UniRule"/>
</dbReference>
<dbReference type="GO" id="GO:0004478">
    <property type="term" value="F:methionine adenosyltransferase activity"/>
    <property type="evidence" value="ECO:0007669"/>
    <property type="project" value="UniProtKB-UniRule"/>
</dbReference>
<dbReference type="GO" id="GO:0006730">
    <property type="term" value="P:one-carbon metabolic process"/>
    <property type="evidence" value="ECO:0007669"/>
    <property type="project" value="UniProtKB-KW"/>
</dbReference>
<dbReference type="GO" id="GO:0006556">
    <property type="term" value="P:S-adenosylmethionine biosynthetic process"/>
    <property type="evidence" value="ECO:0007669"/>
    <property type="project" value="UniProtKB-UniRule"/>
</dbReference>
<dbReference type="CDD" id="cd18079">
    <property type="entry name" value="S-AdoMet_synt"/>
    <property type="match status" value="1"/>
</dbReference>
<dbReference type="FunFam" id="3.30.300.10:FF:000003">
    <property type="entry name" value="S-adenosylmethionine synthase"/>
    <property type="match status" value="1"/>
</dbReference>
<dbReference type="FunFam" id="3.30.300.10:FF:000004">
    <property type="entry name" value="S-adenosylmethionine synthase"/>
    <property type="match status" value="1"/>
</dbReference>
<dbReference type="Gene3D" id="3.30.300.10">
    <property type="match status" value="3"/>
</dbReference>
<dbReference type="HAMAP" id="MF_00086">
    <property type="entry name" value="S_AdoMet_synth1"/>
    <property type="match status" value="1"/>
</dbReference>
<dbReference type="InterPro" id="IPR022631">
    <property type="entry name" value="ADOMET_SYNTHASE_CS"/>
</dbReference>
<dbReference type="InterPro" id="IPR022630">
    <property type="entry name" value="S-AdoMet_synt_C"/>
</dbReference>
<dbReference type="InterPro" id="IPR022629">
    <property type="entry name" value="S-AdoMet_synt_central"/>
</dbReference>
<dbReference type="InterPro" id="IPR022628">
    <property type="entry name" value="S-AdoMet_synt_N"/>
</dbReference>
<dbReference type="InterPro" id="IPR002133">
    <property type="entry name" value="S-AdoMet_synthetase"/>
</dbReference>
<dbReference type="InterPro" id="IPR022636">
    <property type="entry name" value="S-AdoMet_synthetase_sfam"/>
</dbReference>
<dbReference type="NCBIfam" id="TIGR01034">
    <property type="entry name" value="metK"/>
    <property type="match status" value="1"/>
</dbReference>
<dbReference type="PANTHER" id="PTHR11964">
    <property type="entry name" value="S-ADENOSYLMETHIONINE SYNTHETASE"/>
    <property type="match status" value="1"/>
</dbReference>
<dbReference type="Pfam" id="PF02773">
    <property type="entry name" value="S-AdoMet_synt_C"/>
    <property type="match status" value="1"/>
</dbReference>
<dbReference type="Pfam" id="PF02772">
    <property type="entry name" value="S-AdoMet_synt_M"/>
    <property type="match status" value="1"/>
</dbReference>
<dbReference type="Pfam" id="PF00438">
    <property type="entry name" value="S-AdoMet_synt_N"/>
    <property type="match status" value="1"/>
</dbReference>
<dbReference type="PIRSF" id="PIRSF000497">
    <property type="entry name" value="MAT"/>
    <property type="match status" value="1"/>
</dbReference>
<dbReference type="SUPFAM" id="SSF55973">
    <property type="entry name" value="S-adenosylmethionine synthetase"/>
    <property type="match status" value="3"/>
</dbReference>
<dbReference type="PROSITE" id="PS00376">
    <property type="entry name" value="ADOMET_SYNTHASE_1"/>
    <property type="match status" value="1"/>
</dbReference>
<dbReference type="PROSITE" id="PS00377">
    <property type="entry name" value="ADOMET_SYNTHASE_2"/>
    <property type="match status" value="1"/>
</dbReference>
<reference key="1">
    <citation type="submission" date="2009-01" db="EMBL/GenBank/DDBJ databases">
        <title>Complete sequence of chromosome of Caldicellulosiruptor becscii DSM 6725.</title>
        <authorList>
            <person name="Lucas S."/>
            <person name="Copeland A."/>
            <person name="Lapidus A."/>
            <person name="Glavina del Rio T."/>
            <person name="Tice H."/>
            <person name="Bruce D."/>
            <person name="Goodwin L."/>
            <person name="Pitluck S."/>
            <person name="Sims D."/>
            <person name="Meincke L."/>
            <person name="Brettin T."/>
            <person name="Detter J.C."/>
            <person name="Han C."/>
            <person name="Larimer F."/>
            <person name="Land M."/>
            <person name="Hauser L."/>
            <person name="Kyrpides N."/>
            <person name="Ovchinnikova G."/>
            <person name="Kataeva I."/>
            <person name="Adams M.W.W."/>
        </authorList>
    </citation>
    <scope>NUCLEOTIDE SEQUENCE [LARGE SCALE GENOMIC DNA]</scope>
    <source>
        <strain>ATCC BAA-1888 / DSM 6725 / KCTC 15123 / Z-1320</strain>
    </source>
</reference>
<name>METK_CALBD</name>
<feature type="chain" id="PRO_1000196680" description="S-adenosylmethionine synthase">
    <location>
        <begin position="1"/>
        <end position="396"/>
    </location>
</feature>
<feature type="region of interest" description="Flexible loop" evidence="1">
    <location>
        <begin position="98"/>
        <end position="108"/>
    </location>
</feature>
<feature type="binding site" description="in other chain" evidence="1">
    <location>
        <position position="14"/>
    </location>
    <ligand>
        <name>ATP</name>
        <dbReference type="ChEBI" id="CHEBI:30616"/>
        <note>ligand shared between two neighboring subunits</note>
    </ligand>
</feature>
<feature type="binding site" evidence="1">
    <location>
        <position position="16"/>
    </location>
    <ligand>
        <name>Mg(2+)</name>
        <dbReference type="ChEBI" id="CHEBI:18420"/>
    </ligand>
</feature>
<feature type="binding site" evidence="1">
    <location>
        <position position="42"/>
    </location>
    <ligand>
        <name>K(+)</name>
        <dbReference type="ChEBI" id="CHEBI:29103"/>
    </ligand>
</feature>
<feature type="binding site" description="in other chain" evidence="1">
    <location>
        <position position="55"/>
    </location>
    <ligand>
        <name>L-methionine</name>
        <dbReference type="ChEBI" id="CHEBI:57844"/>
        <note>ligand shared between two neighboring subunits</note>
    </ligand>
</feature>
<feature type="binding site" description="in other chain" evidence="1">
    <location>
        <position position="98"/>
    </location>
    <ligand>
        <name>L-methionine</name>
        <dbReference type="ChEBI" id="CHEBI:57844"/>
        <note>ligand shared between two neighboring subunits</note>
    </ligand>
</feature>
<feature type="binding site" description="in other chain" evidence="1">
    <location>
        <begin position="174"/>
        <end position="176"/>
    </location>
    <ligand>
        <name>ATP</name>
        <dbReference type="ChEBI" id="CHEBI:30616"/>
        <note>ligand shared between two neighboring subunits</note>
    </ligand>
</feature>
<feature type="binding site" description="in other chain" evidence="1">
    <location>
        <begin position="240"/>
        <end position="241"/>
    </location>
    <ligand>
        <name>ATP</name>
        <dbReference type="ChEBI" id="CHEBI:30616"/>
        <note>ligand shared between two neighboring subunits</note>
    </ligand>
</feature>
<feature type="binding site" evidence="1">
    <location>
        <position position="249"/>
    </location>
    <ligand>
        <name>ATP</name>
        <dbReference type="ChEBI" id="CHEBI:30616"/>
        <note>ligand shared between two neighboring subunits</note>
    </ligand>
</feature>
<feature type="binding site" evidence="1">
    <location>
        <position position="249"/>
    </location>
    <ligand>
        <name>L-methionine</name>
        <dbReference type="ChEBI" id="CHEBI:57844"/>
        <note>ligand shared between two neighboring subunits</note>
    </ligand>
</feature>
<feature type="binding site" description="in other chain" evidence="1">
    <location>
        <begin position="255"/>
        <end position="256"/>
    </location>
    <ligand>
        <name>ATP</name>
        <dbReference type="ChEBI" id="CHEBI:30616"/>
        <note>ligand shared between two neighboring subunits</note>
    </ligand>
</feature>
<feature type="binding site" evidence="1">
    <location>
        <position position="272"/>
    </location>
    <ligand>
        <name>ATP</name>
        <dbReference type="ChEBI" id="CHEBI:30616"/>
        <note>ligand shared between two neighboring subunits</note>
    </ligand>
</feature>
<feature type="binding site" evidence="1">
    <location>
        <position position="276"/>
    </location>
    <ligand>
        <name>ATP</name>
        <dbReference type="ChEBI" id="CHEBI:30616"/>
        <note>ligand shared between two neighboring subunits</note>
    </ligand>
</feature>
<feature type="binding site" description="in other chain" evidence="1">
    <location>
        <position position="280"/>
    </location>
    <ligand>
        <name>L-methionine</name>
        <dbReference type="ChEBI" id="CHEBI:57844"/>
        <note>ligand shared between two neighboring subunits</note>
    </ligand>
</feature>
<sequence length="396" mass="43463">MRKLFTSESVTEGHPDKICDQISDAVLDAILEKDPYARVACEVAVTTGLVLVMGEITTKCYVDIPKIARDTIREIGYTRAKYGFDADTCAVITSIDEQSPDIAMGVDKALEAKLGEMTEDEIEAIGAGDQGMMFGFACDETPVLMPMPIYLAHKLARRLAYVRKEGILPYLRPDGKTQVTVEYEDDKPVRVDTVVVSTQHSPEVTHAQIEADVIEHVIKPVIPEGMLDKNTKIFINPTGRFVIGGPQGDSGLTGRKIIVDTYGGYARHGGGAFSGKDPTKVDRSATYAARYVAKNIVASGLAKKCEVQVSYAIGVARPLSIRVDTFGTGKISDEKIAEIVKRVFDLRPAAIIRDLNLRRPIYKQVAAYGHFGREDLDLPWERTDKVGEILKEAQNV</sequence>
<proteinExistence type="inferred from homology"/>
<accession>B9MQ10</accession>
<keyword id="KW-0067">ATP-binding</keyword>
<keyword id="KW-0963">Cytoplasm</keyword>
<keyword id="KW-0460">Magnesium</keyword>
<keyword id="KW-0479">Metal-binding</keyword>
<keyword id="KW-0547">Nucleotide-binding</keyword>
<keyword id="KW-0554">One-carbon metabolism</keyword>
<keyword id="KW-0630">Potassium</keyword>
<keyword id="KW-0808">Transferase</keyword>